<gene>
    <name type="primary">secG</name>
    <name type="ordered locus">TM_0479</name>
</gene>
<name>SECG_THEMA</name>
<protein>
    <recommendedName>
        <fullName>Protein-export membrane protein SecG</fullName>
    </recommendedName>
</protein>
<comment type="function">
    <text>Subunit of the protein translocation channel SecYEG.</text>
</comment>
<comment type="subunit">
    <text evidence="1">Component of the Sec protein translocase complex. Heterotrimer consisting of SecY, SecE and SecG subunits. The heterotrimers can form oligomers, although 1 heterotrimer is thought to be able to translocate proteins. Interacts with SecDF, and other proteins may be involved. The channel interacts with SecA via subunit SecY.</text>
</comment>
<comment type="subcellular location">
    <subcellularLocation>
        <location>Cell membrane</location>
        <topology>Multi-pass membrane protein</topology>
    </subcellularLocation>
</comment>
<comment type="similarity">
    <text evidence="2">Belongs to the SecG family.</text>
</comment>
<comment type="sequence caution" evidence="2">
    <conflict type="frameshift">
        <sequence resource="EMBL-CDS" id="AAD35563"/>
    </conflict>
</comment>
<proteinExistence type="evidence at protein level"/>
<organism>
    <name type="scientific">Thermotoga maritima (strain ATCC 43589 / DSM 3109 / JCM 10099 / NBRC 100826 / MSB8)</name>
    <dbReference type="NCBI Taxonomy" id="243274"/>
    <lineage>
        <taxon>Bacteria</taxon>
        <taxon>Thermotogati</taxon>
        <taxon>Thermotogota</taxon>
        <taxon>Thermotogae</taxon>
        <taxon>Thermotogales</taxon>
        <taxon>Thermotogaceae</taxon>
        <taxon>Thermotoga</taxon>
    </lineage>
</organism>
<accession>Q9WYU9</accession>
<dbReference type="EMBL" id="AE000512">
    <property type="protein sequence ID" value="AAD35563.1"/>
    <property type="status" value="ALT_FRAME"/>
    <property type="molecule type" value="Genomic_DNA"/>
</dbReference>
<dbReference type="PIR" id="G72372">
    <property type="entry name" value="G72372"/>
</dbReference>
<dbReference type="RefSeq" id="NP_228289.1">
    <property type="nucleotide sequence ID" value="NC_000853.1"/>
</dbReference>
<dbReference type="PDB" id="3DIN">
    <property type="method" value="X-ray"/>
    <property type="resolution" value="4.50 A"/>
    <property type="chains" value="E/H=1-67"/>
</dbReference>
<dbReference type="PDBsum" id="3DIN"/>
<dbReference type="SMR" id="Q9WYU9"/>
<dbReference type="STRING" id="243274.TM_0479"/>
<dbReference type="TCDB" id="3.A.5.1.4">
    <property type="family name" value="the general secretory pathway (sec) family"/>
</dbReference>
<dbReference type="PaxDb" id="243274-THEMA_02290"/>
<dbReference type="EnsemblBacteria" id="AAD35563">
    <property type="protein sequence ID" value="AAD35563"/>
    <property type="gene ID" value="TM_0479"/>
</dbReference>
<dbReference type="KEGG" id="tma:TM0479"/>
<dbReference type="PATRIC" id="fig|243274.5.peg.486"/>
<dbReference type="eggNOG" id="COG1314">
    <property type="taxonomic scope" value="Bacteria"/>
</dbReference>
<dbReference type="InParanoid" id="Q9WYU9"/>
<dbReference type="OrthoDB" id="37695at2"/>
<dbReference type="Proteomes" id="UP000008183">
    <property type="component" value="Chromosome"/>
</dbReference>
<dbReference type="GO" id="GO:0005886">
    <property type="term" value="C:plasma membrane"/>
    <property type="evidence" value="ECO:0007669"/>
    <property type="project" value="UniProtKB-SubCell"/>
</dbReference>
<dbReference type="GO" id="GO:0015031">
    <property type="term" value="P:protein transport"/>
    <property type="evidence" value="ECO:0007669"/>
    <property type="project" value="UniProtKB-KW"/>
</dbReference>
<reference key="1">
    <citation type="journal article" date="1999" name="Nature">
        <title>Evidence for lateral gene transfer between Archaea and Bacteria from genome sequence of Thermotoga maritima.</title>
        <authorList>
            <person name="Nelson K.E."/>
            <person name="Clayton R.A."/>
            <person name="Gill S.R."/>
            <person name="Gwinn M.L."/>
            <person name="Dodson R.J."/>
            <person name="Haft D.H."/>
            <person name="Hickey E.K."/>
            <person name="Peterson J.D."/>
            <person name="Nelson W.C."/>
            <person name="Ketchum K.A."/>
            <person name="McDonald L.A."/>
            <person name="Utterback T.R."/>
            <person name="Malek J.A."/>
            <person name="Linher K.D."/>
            <person name="Garrett M.M."/>
            <person name="Stewart A.M."/>
            <person name="Cotton M.D."/>
            <person name="Pratt M.S."/>
            <person name="Phillips C.A."/>
            <person name="Richardson D.L."/>
            <person name="Heidelberg J.F."/>
            <person name="Sutton G.G."/>
            <person name="Fleischmann R.D."/>
            <person name="Eisen J.A."/>
            <person name="White O."/>
            <person name="Salzberg S.L."/>
            <person name="Smith H.O."/>
            <person name="Venter J.C."/>
            <person name="Fraser C.M."/>
        </authorList>
    </citation>
    <scope>NUCLEOTIDE SEQUENCE [LARGE SCALE GENOMIC DNA]</scope>
    <source>
        <strain>ATCC 43589 / DSM 3109 / JCM 10099 / NBRC 100826 / MSB8</strain>
    </source>
</reference>
<reference key="2">
    <citation type="journal article" date="2008" name="Nature">
        <title>Structure of a complex of the ATPase SecA and the protein-translocation channel.</title>
        <authorList>
            <person name="Zimmer J."/>
            <person name="Nam Y."/>
            <person name="Rapoport T.A."/>
        </authorList>
    </citation>
    <scope>X-RAY CRYSTALLOGRAPHY (4.50 ANGSTROMS) OF SECYEG IN COMPLEX WITH SECA</scope>
</reference>
<keyword id="KW-0002">3D-structure</keyword>
<keyword id="KW-1003">Cell membrane</keyword>
<keyword id="KW-0472">Membrane</keyword>
<keyword id="KW-0653">Protein transport</keyword>
<keyword id="KW-1185">Reference proteome</keyword>
<keyword id="KW-0811">Translocation</keyword>
<keyword id="KW-0812">Transmembrane</keyword>
<keyword id="KW-1133">Transmembrane helix</keyword>
<keyword id="KW-0813">Transport</keyword>
<sequence length="67" mass="7542">MKTFFLIVHTIISVALIYMVQVQMSKFSELGGASEVEDFTPFLEEEKASTPVERSLLSCLYSFSFPA</sequence>
<evidence type="ECO:0000269" key="1">
    <source>
    </source>
</evidence>
<evidence type="ECO:0000305" key="2"/>
<feature type="chain" id="PRO_0000414190" description="Protein-export membrane protein SecG">
    <location>
        <begin position="1"/>
        <end position="67"/>
    </location>
</feature>
<feature type="topological domain" description="Periplasmic">
    <location>
        <begin position="1"/>
        <end position="14"/>
    </location>
</feature>
<feature type="transmembrane region" description="Helical; Name=Helix 1">
    <location>
        <begin position="15"/>
        <end position="29"/>
    </location>
</feature>
<feature type="topological domain" description="Cytoplasmic">
    <location>
        <begin position="30"/>
        <end position="53"/>
    </location>
</feature>
<feature type="transmembrane region" description="Helical; Name=Helix 2">
    <location>
        <begin position="54"/>
        <end position="63"/>
    </location>
</feature>
<feature type="topological domain" description="Periplasmic">
    <location>
        <begin position="64"/>
        <end position="67"/>
    </location>
</feature>